<evidence type="ECO:0000250" key="1"/>
<evidence type="ECO:0000255" key="2">
    <source>
        <dbReference type="PROSITE-ProRule" id="PRU00223"/>
    </source>
</evidence>
<evidence type="ECO:0000256" key="3">
    <source>
        <dbReference type="SAM" id="MobiDB-lite"/>
    </source>
</evidence>
<evidence type="ECO:0000305" key="4"/>
<name>WRK12_ARATH</name>
<reference key="1">
    <citation type="submission" date="2001-08" db="EMBL/GenBank/DDBJ databases">
        <authorList>
            <person name="Ulker B."/>
            <person name="Kushnir S."/>
            <person name="Somssich I.E."/>
        </authorList>
    </citation>
    <scope>NUCLEOTIDE SEQUENCE [MRNA]</scope>
    <source>
        <strain>cv. Columbia</strain>
        <tissue>Flower</tissue>
    </source>
</reference>
<reference key="2">
    <citation type="journal article" date="1999" name="Nature">
        <title>Sequence and analysis of chromosome 2 of the plant Arabidopsis thaliana.</title>
        <authorList>
            <person name="Lin X."/>
            <person name="Kaul S."/>
            <person name="Rounsley S.D."/>
            <person name="Shea T.P."/>
            <person name="Benito M.-I."/>
            <person name="Town C.D."/>
            <person name="Fujii C.Y."/>
            <person name="Mason T.M."/>
            <person name="Bowman C.L."/>
            <person name="Barnstead M.E."/>
            <person name="Feldblyum T.V."/>
            <person name="Buell C.R."/>
            <person name="Ketchum K.A."/>
            <person name="Lee J.J."/>
            <person name="Ronning C.M."/>
            <person name="Koo H.L."/>
            <person name="Moffat K.S."/>
            <person name="Cronin L.A."/>
            <person name="Shen M."/>
            <person name="Pai G."/>
            <person name="Van Aken S."/>
            <person name="Umayam L."/>
            <person name="Tallon L.J."/>
            <person name="Gill J.E."/>
            <person name="Adams M.D."/>
            <person name="Carrera A.J."/>
            <person name="Creasy T.H."/>
            <person name="Goodman H.M."/>
            <person name="Somerville C.R."/>
            <person name="Copenhaver G.P."/>
            <person name="Preuss D."/>
            <person name="Nierman W.C."/>
            <person name="White O."/>
            <person name="Eisen J.A."/>
            <person name="Salzberg S.L."/>
            <person name="Fraser C.M."/>
            <person name="Venter J.C."/>
        </authorList>
    </citation>
    <scope>NUCLEOTIDE SEQUENCE [LARGE SCALE GENOMIC DNA]</scope>
    <source>
        <strain>cv. Columbia</strain>
    </source>
</reference>
<reference key="3">
    <citation type="journal article" date="2017" name="Plant J.">
        <title>Araport11: a complete reannotation of the Arabidopsis thaliana reference genome.</title>
        <authorList>
            <person name="Cheng C.Y."/>
            <person name="Krishnakumar V."/>
            <person name="Chan A.P."/>
            <person name="Thibaud-Nissen F."/>
            <person name="Schobel S."/>
            <person name="Town C.D."/>
        </authorList>
    </citation>
    <scope>GENOME REANNOTATION</scope>
    <source>
        <strain>cv. Columbia</strain>
    </source>
</reference>
<reference key="4">
    <citation type="submission" date="2002-03" db="EMBL/GenBank/DDBJ databases">
        <title>Full-length cDNA from Arabidopsis thaliana.</title>
        <authorList>
            <person name="Brover V.V."/>
            <person name="Troukhan M.E."/>
            <person name="Alexandrov N.A."/>
            <person name="Lu Y.-P."/>
            <person name="Flavell R.B."/>
            <person name="Feldmann K.A."/>
        </authorList>
    </citation>
    <scope>NUCLEOTIDE SEQUENCE [LARGE SCALE MRNA] OF 9-218</scope>
</reference>
<proteinExistence type="evidence at protein level"/>
<gene>
    <name type="primary">WRKY12</name>
    <name type="ordered locus">At2g44745</name>
    <name type="ORF">F16B22.46</name>
</gene>
<dbReference type="EMBL" id="AF404857">
    <property type="protein sequence ID" value="AAK96195.1"/>
    <property type="molecule type" value="mRNA"/>
</dbReference>
<dbReference type="EMBL" id="AC003672">
    <property type="protein sequence ID" value="AAM14881.1"/>
    <property type="status" value="ALT_INIT"/>
    <property type="molecule type" value="Genomic_DNA"/>
</dbReference>
<dbReference type="EMBL" id="CP002685">
    <property type="protein sequence ID" value="AEC10462.1"/>
    <property type="molecule type" value="Genomic_DNA"/>
</dbReference>
<dbReference type="EMBL" id="AY088161">
    <property type="protein sequence ID" value="AAM65705.1"/>
    <property type="status" value="ALT_INIT"/>
    <property type="molecule type" value="mRNA"/>
</dbReference>
<dbReference type="RefSeq" id="NP_566025.2">
    <property type="nucleotide sequence ID" value="NM_130039.3"/>
</dbReference>
<dbReference type="SMR" id="Q93WY4"/>
<dbReference type="BioGRID" id="4419">
    <property type="interactions" value="3"/>
</dbReference>
<dbReference type="IntAct" id="Q93WY4">
    <property type="interactions" value="1"/>
</dbReference>
<dbReference type="STRING" id="3702.Q93WY4"/>
<dbReference type="PaxDb" id="3702-AT2G44745.1"/>
<dbReference type="ProteomicsDB" id="234422"/>
<dbReference type="EnsemblPlants" id="AT2G44745.1">
    <property type="protein sequence ID" value="AT2G44745.1"/>
    <property type="gene ID" value="AT2G44745"/>
</dbReference>
<dbReference type="GeneID" id="819083"/>
<dbReference type="Gramene" id="AT2G44745.1">
    <property type="protein sequence ID" value="AT2G44745.1"/>
    <property type="gene ID" value="AT2G44745"/>
</dbReference>
<dbReference type="KEGG" id="ath:AT2G44745"/>
<dbReference type="Araport" id="AT2G44745"/>
<dbReference type="TAIR" id="AT2G44745">
    <property type="gene designation" value="WRKY12"/>
</dbReference>
<dbReference type="eggNOG" id="ENOG502QTRJ">
    <property type="taxonomic scope" value="Eukaryota"/>
</dbReference>
<dbReference type="HOGENOM" id="CLU_073202_0_2_1"/>
<dbReference type="InParanoid" id="Q93WY4"/>
<dbReference type="OMA" id="AHSNSWW"/>
<dbReference type="PhylomeDB" id="Q93WY4"/>
<dbReference type="PRO" id="PR:Q93WY4"/>
<dbReference type="Proteomes" id="UP000006548">
    <property type="component" value="Chromosome 2"/>
</dbReference>
<dbReference type="ExpressionAtlas" id="Q93WY4">
    <property type="expression patterns" value="baseline and differential"/>
</dbReference>
<dbReference type="GO" id="GO:0005634">
    <property type="term" value="C:nucleus"/>
    <property type="evidence" value="ECO:0007669"/>
    <property type="project" value="UniProtKB-SubCell"/>
</dbReference>
<dbReference type="GO" id="GO:0003700">
    <property type="term" value="F:DNA-binding transcription factor activity"/>
    <property type="evidence" value="ECO:0000250"/>
    <property type="project" value="TAIR"/>
</dbReference>
<dbReference type="GO" id="GO:0043565">
    <property type="term" value="F:sequence-specific DNA binding"/>
    <property type="evidence" value="ECO:0007669"/>
    <property type="project" value="InterPro"/>
</dbReference>
<dbReference type="GO" id="GO:0009832">
    <property type="term" value="P:plant-type cell wall biogenesis"/>
    <property type="evidence" value="ECO:0000315"/>
    <property type="project" value="TAIR"/>
</dbReference>
<dbReference type="FunFam" id="2.20.25.80:FF:000003">
    <property type="entry name" value="WRKY transcription factor 57"/>
    <property type="match status" value="1"/>
</dbReference>
<dbReference type="Gene3D" id="2.20.25.80">
    <property type="entry name" value="WRKY domain"/>
    <property type="match status" value="1"/>
</dbReference>
<dbReference type="InterPro" id="IPR003657">
    <property type="entry name" value="WRKY_dom"/>
</dbReference>
<dbReference type="InterPro" id="IPR036576">
    <property type="entry name" value="WRKY_dom_sf"/>
</dbReference>
<dbReference type="InterPro" id="IPR044810">
    <property type="entry name" value="WRKY_plant"/>
</dbReference>
<dbReference type="PANTHER" id="PTHR31221:SF137">
    <property type="entry name" value="WRKY TRANSCRIPTION FACTOR 12-RELATED"/>
    <property type="match status" value="1"/>
</dbReference>
<dbReference type="PANTHER" id="PTHR31221">
    <property type="entry name" value="WRKY TRANSCRIPTION FACTOR PROTEIN 1-RELATED"/>
    <property type="match status" value="1"/>
</dbReference>
<dbReference type="Pfam" id="PF03106">
    <property type="entry name" value="WRKY"/>
    <property type="match status" value="1"/>
</dbReference>
<dbReference type="SMART" id="SM00774">
    <property type="entry name" value="WRKY"/>
    <property type="match status" value="1"/>
</dbReference>
<dbReference type="SUPFAM" id="SSF118290">
    <property type="entry name" value="WRKY DNA-binding domain"/>
    <property type="match status" value="1"/>
</dbReference>
<dbReference type="PROSITE" id="PS50811">
    <property type="entry name" value="WRKY"/>
    <property type="match status" value="1"/>
</dbReference>
<comment type="function">
    <text evidence="1">Transcription factor. Interacts specifically with the W box (5'-(T)TGAC[CT]-3'), a frequently occurring elicitor-responsive cis-acting element (By similarity).</text>
</comment>
<comment type="interaction">
    <interactant intactId="EBI-25513081">
        <id>Q93WY4</id>
    </interactant>
    <interactant intactId="EBI-4426649">
        <id>Q17TI5</id>
        <label>BRX</label>
    </interactant>
    <organismsDiffer>false</organismsDiffer>
    <experiments>3</experiments>
</comment>
<comment type="subcellular location">
    <subcellularLocation>
        <location evidence="4">Nucleus</location>
    </subcellularLocation>
</comment>
<comment type="similarity">
    <text evidence="4">Belongs to the WRKY group II-c family.</text>
</comment>
<comment type="sequence caution" evidence="4">
    <conflict type="erroneous initiation">
        <sequence resource="EMBL-CDS" id="AAM14881"/>
    </conflict>
</comment>
<comment type="sequence caution" evidence="4">
    <conflict type="erroneous initiation">
        <sequence resource="EMBL-CDS" id="AAM65705"/>
    </conflict>
</comment>
<keyword id="KW-0238">DNA-binding</keyword>
<keyword id="KW-0539">Nucleus</keyword>
<keyword id="KW-1185">Reference proteome</keyword>
<keyword id="KW-0804">Transcription</keyword>
<keyword id="KW-0805">Transcription regulation</keyword>
<accession>Q93WY4</accession>
<accession>Q8S8S5</accession>
<feature type="chain" id="PRO_0000133654" description="Probable WRKY transcription factor 12">
    <location>
        <begin position="1"/>
        <end position="218"/>
    </location>
</feature>
<feature type="DNA-binding region" description="WRKY" evidence="2">
    <location>
        <begin position="139"/>
        <end position="204"/>
    </location>
</feature>
<feature type="region of interest" description="Disordered" evidence="3">
    <location>
        <begin position="49"/>
        <end position="120"/>
    </location>
</feature>
<feature type="region of interest" description="Disordered" evidence="3">
    <location>
        <begin position="199"/>
        <end position="218"/>
    </location>
</feature>
<feature type="compositionally biased region" description="Low complexity" evidence="3">
    <location>
        <begin position="49"/>
        <end position="63"/>
    </location>
</feature>
<feature type="compositionally biased region" description="Polar residues" evidence="3">
    <location>
        <begin position="64"/>
        <end position="77"/>
    </location>
</feature>
<feature type="compositionally biased region" description="Low complexity" evidence="3">
    <location>
        <begin position="105"/>
        <end position="116"/>
    </location>
</feature>
<organism>
    <name type="scientific">Arabidopsis thaliana</name>
    <name type="common">Mouse-ear cress</name>
    <dbReference type="NCBI Taxonomy" id="3702"/>
    <lineage>
        <taxon>Eukaryota</taxon>
        <taxon>Viridiplantae</taxon>
        <taxon>Streptophyta</taxon>
        <taxon>Embryophyta</taxon>
        <taxon>Tracheophyta</taxon>
        <taxon>Spermatophyta</taxon>
        <taxon>Magnoliopsida</taxon>
        <taxon>eudicotyledons</taxon>
        <taxon>Gunneridae</taxon>
        <taxon>Pentapetalae</taxon>
        <taxon>rosids</taxon>
        <taxon>malvids</taxon>
        <taxon>Brassicales</taxon>
        <taxon>Brassicaceae</taxon>
        <taxon>Camelineae</taxon>
        <taxon>Arabidopsis</taxon>
    </lineage>
</organism>
<sequence length="218" mass="24548">MEGGGRRVFSNYDLQQVTSSSTTIQENMNFLVPFEETNVLTFFSSSSSSSLSSPSFPIHNSSSTTTTHAPLGFSNNLQGGGPLGSKVVNDDQENFGGGTNNDAHSNSWWRSNSGSGDMKNKVKIRRKLREPRFCFQTKSDVDVLDDGYKWRKYGQKVVKNSLHPRSYYRCTHNNCRVKKRVERLSEDCRMVITTYEGRHNHIPSDDSTSPDHDCLSSF</sequence>
<protein>
    <recommendedName>
        <fullName>Probable WRKY transcription factor 12</fullName>
    </recommendedName>
    <alternativeName>
        <fullName>WRKY DNA-binding protein 12</fullName>
    </alternativeName>
</protein>